<sequence>MATINMTPGDLELGRDRGRIGKPIEIPLLENFGFDSQLGPFYLGFWNAVAYITGGIFTFIWLMVMFAQVNYNPVAFAKYFVVLQIDPPSSRYGLSFPPLNEGGWWLIATFFLTVSIFAWYMHIYTRAKALGIKPYLAYGFTGAIALYLVIYIIRPVWMGDWSEAPAHGIKALLDWTNNVSVRYGNFYYNPFHMLSIFFLLGSTLLLAMHAGTIWALEKYAAHEEWNEIQAPGTGTERAQLFWRWCMGFNANAYSIHLWAFWFAWLCGITGALGVFFSMPDFVNNWFQWGIEAGINYPQGPTPPVSLP</sequence>
<gene>
    <name type="primary">pufM</name>
    <name type="ordered locus">Caur_1051</name>
</gene>
<comment type="function">
    <text>The reaction center is a membrane-bound complex that mediates the initial photochemical event in the electron transfer process of photosynthesis.</text>
</comment>
<comment type="subunit">
    <text>Reaction center is composed of four bacteriochlorophylls, two bacteriopheophytins, two ubiquinones, one iron, and two highly hydrophobic polypeptide chains (designated L and M).</text>
</comment>
<comment type="subcellular location">
    <subcellularLocation>
        <location>Cell membrane</location>
        <topology>Multi-pass membrane protein</topology>
    </subcellularLocation>
</comment>
<comment type="similarity">
    <text evidence="3">Belongs to the reaction center PufL/M/PsbA/D family.</text>
</comment>
<protein>
    <recommendedName>
        <fullName>Reaction center protein M chain</fullName>
    </recommendedName>
    <alternativeName>
        <fullName>Photosynthetic reaction center M subunit</fullName>
    </alternativeName>
</protein>
<accession>P09438</accession>
<accession>A9WII3</accession>
<dbReference type="EMBL" id="X07847">
    <property type="protein sequence ID" value="CAA30694.1"/>
    <property type="molecule type" value="Genomic_DNA"/>
</dbReference>
<dbReference type="EMBL" id="X14979">
    <property type="protein sequence ID" value="CAA33103.1"/>
    <property type="molecule type" value="Genomic_DNA"/>
</dbReference>
<dbReference type="EMBL" id="CP000909">
    <property type="protein sequence ID" value="ABY34283.1"/>
    <property type="molecule type" value="Genomic_DNA"/>
</dbReference>
<dbReference type="PIR" id="S03567">
    <property type="entry name" value="WNJXM"/>
</dbReference>
<dbReference type="RefSeq" id="WP_012256939.1">
    <property type="nucleotide sequence ID" value="NC_010175.1"/>
</dbReference>
<dbReference type="RefSeq" id="YP_001634672.1">
    <property type="nucleotide sequence ID" value="NC_010175.1"/>
</dbReference>
<dbReference type="PDB" id="8YDM">
    <property type="method" value="EM"/>
    <property type="resolution" value="3.05 A"/>
    <property type="chains" value="M=1-307"/>
</dbReference>
<dbReference type="PDBsum" id="8YDM"/>
<dbReference type="EMDB" id="EMD-39177"/>
<dbReference type="SMR" id="P09438"/>
<dbReference type="STRING" id="324602.Caur_1051"/>
<dbReference type="EnsemblBacteria" id="ABY34283">
    <property type="protein sequence ID" value="ABY34283"/>
    <property type="gene ID" value="Caur_1051"/>
</dbReference>
<dbReference type="KEGG" id="cau:Caur_1051"/>
<dbReference type="PATRIC" id="fig|324602.8.peg.1198"/>
<dbReference type="eggNOG" id="ENOG502Z87P">
    <property type="taxonomic scope" value="Bacteria"/>
</dbReference>
<dbReference type="HOGENOM" id="CLU_078782_0_0_0"/>
<dbReference type="InParanoid" id="P09438"/>
<dbReference type="Proteomes" id="UP000002008">
    <property type="component" value="Chromosome"/>
</dbReference>
<dbReference type="GO" id="GO:0009523">
    <property type="term" value="C:photosystem II"/>
    <property type="evidence" value="ECO:0000318"/>
    <property type="project" value="GO_Central"/>
</dbReference>
<dbReference type="GO" id="GO:0005886">
    <property type="term" value="C:plasma membrane"/>
    <property type="evidence" value="ECO:0007669"/>
    <property type="project" value="UniProtKB-SubCell"/>
</dbReference>
<dbReference type="GO" id="GO:0030077">
    <property type="term" value="C:plasma membrane light-harvesting complex"/>
    <property type="evidence" value="ECO:0007669"/>
    <property type="project" value="InterPro"/>
</dbReference>
<dbReference type="GO" id="GO:0042314">
    <property type="term" value="F:bacteriochlorophyll binding"/>
    <property type="evidence" value="ECO:0007669"/>
    <property type="project" value="UniProtKB-KW"/>
</dbReference>
<dbReference type="GO" id="GO:0045156">
    <property type="term" value="F:electron transporter, transferring electrons within the cyclic electron transport pathway of photosynthesis activity"/>
    <property type="evidence" value="ECO:0007669"/>
    <property type="project" value="InterPro"/>
</dbReference>
<dbReference type="GO" id="GO:0046872">
    <property type="term" value="F:metal ion binding"/>
    <property type="evidence" value="ECO:0007669"/>
    <property type="project" value="UniProtKB-KW"/>
</dbReference>
<dbReference type="GO" id="GO:0009772">
    <property type="term" value="P:photosynthetic electron transport in photosystem II"/>
    <property type="evidence" value="ECO:0007669"/>
    <property type="project" value="InterPro"/>
</dbReference>
<dbReference type="CDD" id="cd09291">
    <property type="entry name" value="Photo-RC_M"/>
    <property type="match status" value="1"/>
</dbReference>
<dbReference type="Gene3D" id="1.20.85.10">
    <property type="entry name" value="Photosystem II protein D1-like"/>
    <property type="match status" value="2"/>
</dbReference>
<dbReference type="InterPro" id="IPR036854">
    <property type="entry name" value="Photo_II_D1/D2_sf"/>
</dbReference>
<dbReference type="InterPro" id="IPR000484">
    <property type="entry name" value="Photo_RC_L/M"/>
</dbReference>
<dbReference type="InterPro" id="IPR055265">
    <property type="entry name" value="Photo_RC_L/M_CS"/>
</dbReference>
<dbReference type="InterPro" id="IPR005781">
    <property type="entry name" value="Photo_RC_M"/>
</dbReference>
<dbReference type="NCBIfam" id="TIGR01115">
    <property type="entry name" value="pufM"/>
    <property type="match status" value="1"/>
</dbReference>
<dbReference type="Pfam" id="PF00124">
    <property type="entry name" value="Photo_RC"/>
    <property type="match status" value="1"/>
</dbReference>
<dbReference type="PRINTS" id="PR00256">
    <property type="entry name" value="REACTNCENTRE"/>
</dbReference>
<dbReference type="SUPFAM" id="SSF81483">
    <property type="entry name" value="Bacterial photosystem II reaction centre, L and M subunits"/>
    <property type="match status" value="1"/>
</dbReference>
<dbReference type="PROSITE" id="PS00244">
    <property type="entry name" value="REACTION_CENTER"/>
    <property type="match status" value="1"/>
</dbReference>
<reference key="1">
    <citation type="journal article" date="1988" name="FEBS Lett.">
        <title>Photosynthetic reaction centre of Chloroflexus aurantiacus. Primary structure of M-subunit.</title>
        <authorList>
            <person name="Ovchinnikov Y.A."/>
            <person name="Abdulaev N.G."/>
            <person name="Shmuckler B.E."/>
            <person name="Zargarov A.A."/>
            <person name="Kutuzov M.A."/>
            <person name="Telezhinskaya I.N."/>
            <person name="Levina N.B."/>
            <person name="Zolotarev A.S."/>
        </authorList>
    </citation>
    <scope>NUCLEOTIDE SEQUENCE [GENOMIC DNA]</scope>
    <scope>PARTIAL PROTEIN SEQUENCE</scope>
</reference>
<reference key="2">
    <citation type="journal article" date="1989" name="Eur. J. Biochem.">
        <title>The primary structure of the Chloroflexus aurantiacus reaction-center polypeptides.</title>
        <authorList>
            <person name="Shiozawa J.A."/>
            <person name="Lottspeich F."/>
            <person name="Oesterhelt D."/>
            <person name="Feick R."/>
        </authorList>
    </citation>
    <scope>NUCLEOTIDE SEQUENCE [GENOMIC DNA]</scope>
</reference>
<reference key="3">
    <citation type="journal article" date="2011" name="BMC Genomics">
        <title>Complete genome sequence of the filamentous anoxygenic phototrophic bacterium Chloroflexus aurantiacus.</title>
        <authorList>
            <person name="Tang K.H."/>
            <person name="Barry K."/>
            <person name="Chertkov O."/>
            <person name="Dalin E."/>
            <person name="Han C.S."/>
            <person name="Hauser L.J."/>
            <person name="Honchak B.M."/>
            <person name="Karbach L.E."/>
            <person name="Land M.L."/>
            <person name="Lapidus A."/>
            <person name="Larimer F.W."/>
            <person name="Mikhailova N."/>
            <person name="Pitluck S."/>
            <person name="Pierson B.K."/>
            <person name="Blankenship R.E."/>
        </authorList>
    </citation>
    <scope>NUCLEOTIDE SEQUENCE [LARGE SCALE GENOMIC DNA]</scope>
    <source>
        <strain>ATCC 29366 / DSM 635 / J-10-fl</strain>
    </source>
</reference>
<organism>
    <name type="scientific">Chloroflexus aurantiacus (strain ATCC 29366 / DSM 635 / J-10-fl)</name>
    <dbReference type="NCBI Taxonomy" id="324602"/>
    <lineage>
        <taxon>Bacteria</taxon>
        <taxon>Bacillati</taxon>
        <taxon>Chloroflexota</taxon>
        <taxon>Chloroflexia</taxon>
        <taxon>Chloroflexales</taxon>
        <taxon>Chloroflexineae</taxon>
        <taxon>Chloroflexaceae</taxon>
        <taxon>Chloroflexus</taxon>
    </lineage>
</organism>
<proteinExistence type="evidence at protein level"/>
<name>RCEM_CHLAA</name>
<keyword id="KW-0002">3D-structure</keyword>
<keyword id="KW-0076">Bacteriochlorophyll</keyword>
<keyword id="KW-1003">Cell membrane</keyword>
<keyword id="KW-0148">Chlorophyll</keyword>
<keyword id="KW-0157">Chromophore</keyword>
<keyword id="KW-0903">Direct protein sequencing</keyword>
<keyword id="KW-0249">Electron transport</keyword>
<keyword id="KW-0408">Iron</keyword>
<keyword id="KW-0460">Magnesium</keyword>
<keyword id="KW-0472">Membrane</keyword>
<keyword id="KW-0479">Metal-binding</keyword>
<keyword id="KW-0602">Photosynthesis</keyword>
<keyword id="KW-0674">Reaction center</keyword>
<keyword id="KW-1185">Reference proteome</keyword>
<keyword id="KW-0812">Transmembrane</keyword>
<keyword id="KW-1133">Transmembrane helix</keyword>
<keyword id="KW-0813">Transport</keyword>
<evidence type="ECO:0000255" key="1"/>
<evidence type="ECO:0000269" key="2">
    <source>
    </source>
</evidence>
<evidence type="ECO:0000305" key="3"/>
<feature type="initiator methionine" description="Removed">
    <location>
        <position position="1"/>
    </location>
</feature>
<feature type="chain" id="PRO_0000090411" description="Reaction center protein M chain">
    <location>
        <begin position="2"/>
        <end position="307"/>
    </location>
</feature>
<feature type="transmembrane region" description="Helical" evidence="1">
    <location>
        <begin position="45"/>
        <end position="69"/>
    </location>
</feature>
<feature type="transmembrane region" description="Helical" evidence="1">
    <location>
        <begin position="103"/>
        <end position="123"/>
    </location>
</feature>
<feature type="transmembrane region" description="Helical" evidence="1">
    <location>
        <begin position="133"/>
        <end position="153"/>
    </location>
</feature>
<feature type="transmembrane region" description="Helical" evidence="1">
    <location>
        <begin position="196"/>
        <end position="216"/>
    </location>
</feature>
<feature type="transmembrane region" description="Helical" evidence="1">
    <location>
        <begin position="257"/>
        <end position="277"/>
    </location>
</feature>
<feature type="binding site" description="axial binding residue">
    <location>
        <position position="192"/>
    </location>
    <ligand>
        <name>(7R,8Z)-bacteriochlorophyll b</name>
        <dbReference type="ChEBI" id="CHEBI:30034"/>
    </ligand>
    <ligandPart>
        <name>Mg</name>
        <dbReference type="ChEBI" id="CHEBI:25107"/>
    </ligandPart>
</feature>
<feature type="binding site">
    <location>
        <position position="209"/>
    </location>
    <ligand>
        <name>Fe cation</name>
        <dbReference type="ChEBI" id="CHEBI:24875"/>
    </ligand>
</feature>
<feature type="binding site">
    <location>
        <position position="236"/>
    </location>
    <ligand>
        <name>Fe cation</name>
        <dbReference type="ChEBI" id="CHEBI:24875"/>
    </ligand>
</feature>
<feature type="binding site">
    <location>
        <position position="256"/>
    </location>
    <ligand>
        <name>Fe cation</name>
        <dbReference type="ChEBI" id="CHEBI:24875"/>
    </ligand>
</feature>
<feature type="modified residue" description="Blocked amino end (Ala)" evidence="2">
    <location>
        <position position="2"/>
    </location>
</feature>